<comment type="function">
    <text evidence="1">Catalyzes a salvage reaction resulting in the formation of IMP that is energically less costly than de novo synthesis.</text>
</comment>
<comment type="catalytic activity">
    <reaction evidence="1">
        <text>IMP + diphosphate = hypoxanthine + 5-phospho-alpha-D-ribose 1-diphosphate</text>
        <dbReference type="Rhea" id="RHEA:17973"/>
        <dbReference type="ChEBI" id="CHEBI:17368"/>
        <dbReference type="ChEBI" id="CHEBI:33019"/>
        <dbReference type="ChEBI" id="CHEBI:58017"/>
        <dbReference type="ChEBI" id="CHEBI:58053"/>
        <dbReference type="EC" id="2.4.2.8"/>
    </reaction>
</comment>
<comment type="catalytic activity">
    <reaction evidence="1">
        <text>GMP + diphosphate = guanine + 5-phospho-alpha-D-ribose 1-diphosphate</text>
        <dbReference type="Rhea" id="RHEA:25424"/>
        <dbReference type="ChEBI" id="CHEBI:16235"/>
        <dbReference type="ChEBI" id="CHEBI:33019"/>
        <dbReference type="ChEBI" id="CHEBI:58017"/>
        <dbReference type="ChEBI" id="CHEBI:58115"/>
        <dbReference type="EC" id="2.4.2.8"/>
    </reaction>
</comment>
<comment type="pathway">
    <text evidence="1">Purine metabolism; IMP biosynthesis via salvage pathway; IMP from hypoxanthine: step 1/1.</text>
</comment>
<comment type="subunit">
    <text evidence="1">Homodimer.</text>
</comment>
<comment type="subcellular location">
    <subcellularLocation>
        <location evidence="1">Cytoplasm</location>
    </subcellularLocation>
</comment>
<comment type="similarity">
    <text evidence="1">Belongs to the purine/pyrimidine phosphoribosyltransferase family. Archaeal HPRT subfamily.</text>
</comment>
<proteinExistence type="inferred from homology"/>
<dbReference type="EC" id="2.4.2.8" evidence="1"/>
<dbReference type="EMBL" id="CP001899">
    <property type="protein sequence ID" value="ADC66240.1"/>
    <property type="molecule type" value="Genomic_DNA"/>
</dbReference>
<dbReference type="RefSeq" id="WP_012966579.1">
    <property type="nucleotide sequence ID" value="NC_013849.1"/>
</dbReference>
<dbReference type="SMR" id="D3S0H7"/>
<dbReference type="STRING" id="589924.Ferp_2109"/>
<dbReference type="PaxDb" id="589924-Ferp_2109"/>
<dbReference type="GeneID" id="8779645"/>
<dbReference type="KEGG" id="fpl:Ferp_2109"/>
<dbReference type="eggNOG" id="arCOG00030">
    <property type="taxonomic scope" value="Archaea"/>
</dbReference>
<dbReference type="HOGENOM" id="CLU_126376_0_0_2"/>
<dbReference type="OrthoDB" id="8323at2157"/>
<dbReference type="UniPathway" id="UPA00591">
    <property type="reaction ID" value="UER00648"/>
</dbReference>
<dbReference type="Proteomes" id="UP000002613">
    <property type="component" value="Chromosome"/>
</dbReference>
<dbReference type="GO" id="GO:0005737">
    <property type="term" value="C:cytoplasm"/>
    <property type="evidence" value="ECO:0007669"/>
    <property type="project" value="UniProtKB-SubCell"/>
</dbReference>
<dbReference type="GO" id="GO:0052657">
    <property type="term" value="F:guanine phosphoribosyltransferase activity"/>
    <property type="evidence" value="ECO:0007669"/>
    <property type="project" value="RHEA"/>
</dbReference>
<dbReference type="GO" id="GO:0004422">
    <property type="term" value="F:hypoxanthine phosphoribosyltransferase activity"/>
    <property type="evidence" value="ECO:0007669"/>
    <property type="project" value="UniProtKB-UniRule"/>
</dbReference>
<dbReference type="GO" id="GO:0032264">
    <property type="term" value="P:IMP salvage"/>
    <property type="evidence" value="ECO:0007669"/>
    <property type="project" value="UniProtKB-UniRule"/>
</dbReference>
<dbReference type="GO" id="GO:0006166">
    <property type="term" value="P:purine ribonucleoside salvage"/>
    <property type="evidence" value="ECO:0007669"/>
    <property type="project" value="UniProtKB-KW"/>
</dbReference>
<dbReference type="CDD" id="cd06223">
    <property type="entry name" value="PRTases_typeI"/>
    <property type="match status" value="1"/>
</dbReference>
<dbReference type="Gene3D" id="3.40.50.2020">
    <property type="match status" value="1"/>
</dbReference>
<dbReference type="HAMAP" id="MF_01467">
    <property type="entry name" value="Hypx_phosphoribosyltr"/>
    <property type="match status" value="1"/>
</dbReference>
<dbReference type="InterPro" id="IPR026597">
    <property type="entry name" value="HGPRTase-like"/>
</dbReference>
<dbReference type="InterPro" id="IPR000836">
    <property type="entry name" value="PRibTrfase_dom"/>
</dbReference>
<dbReference type="InterPro" id="IPR029057">
    <property type="entry name" value="PRTase-like"/>
</dbReference>
<dbReference type="InterPro" id="IPR050118">
    <property type="entry name" value="Pur/Pyrimidine_PRTase"/>
</dbReference>
<dbReference type="NCBIfam" id="NF040646">
    <property type="entry name" value="HPT_Archaea"/>
    <property type="match status" value="1"/>
</dbReference>
<dbReference type="NCBIfam" id="NF002635">
    <property type="entry name" value="PRK02304.1-4"/>
    <property type="match status" value="1"/>
</dbReference>
<dbReference type="PANTHER" id="PTHR43864">
    <property type="entry name" value="HYPOXANTHINE/GUANINE PHOSPHORIBOSYLTRANSFERASE"/>
    <property type="match status" value="1"/>
</dbReference>
<dbReference type="PANTHER" id="PTHR43864:SF1">
    <property type="entry name" value="XANTHINE PHOSPHORIBOSYLTRANSFERASE"/>
    <property type="match status" value="1"/>
</dbReference>
<dbReference type="Pfam" id="PF00156">
    <property type="entry name" value="Pribosyltran"/>
    <property type="match status" value="1"/>
</dbReference>
<dbReference type="SUPFAM" id="SSF53271">
    <property type="entry name" value="PRTase-like"/>
    <property type="match status" value="1"/>
</dbReference>
<dbReference type="PROSITE" id="PS00103">
    <property type="entry name" value="PUR_PYR_PR_TRANSFER"/>
    <property type="match status" value="1"/>
</dbReference>
<reference key="1">
    <citation type="submission" date="2010-02" db="EMBL/GenBank/DDBJ databases">
        <title>Complete sequence of Ferroglobus placidus DSM 10642.</title>
        <authorList>
            <consortium name="US DOE Joint Genome Institute"/>
            <person name="Lucas S."/>
            <person name="Copeland A."/>
            <person name="Lapidus A."/>
            <person name="Cheng J.-F."/>
            <person name="Bruce D."/>
            <person name="Goodwin L."/>
            <person name="Pitluck S."/>
            <person name="Saunders E."/>
            <person name="Brettin T."/>
            <person name="Detter J.C."/>
            <person name="Han C."/>
            <person name="Tapia R."/>
            <person name="Larimer F."/>
            <person name="Land M."/>
            <person name="Hauser L."/>
            <person name="Kyrpides N."/>
            <person name="Ivanova N."/>
            <person name="Holmes D."/>
            <person name="Lovley D."/>
            <person name="Kyrpides N."/>
            <person name="Anderson I.J."/>
            <person name="Woyke T."/>
        </authorList>
    </citation>
    <scope>NUCLEOTIDE SEQUENCE [LARGE SCALE GENOMIC DNA]</scope>
    <source>
        <strain>DSM 10642 / AEDII12DO</strain>
    </source>
</reference>
<name>HPRT_FERPA</name>
<protein>
    <recommendedName>
        <fullName evidence="1">Hypoxanthine/guanine phosphoribosyltransferase</fullName>
        <shortName evidence="1">HGPRTase</shortName>
        <ecNumber evidence="1">2.4.2.8</ecNumber>
    </recommendedName>
</protein>
<evidence type="ECO:0000255" key="1">
    <source>
        <dbReference type="HAMAP-Rule" id="MF_01467"/>
    </source>
</evidence>
<keyword id="KW-0963">Cytoplasm</keyword>
<keyword id="KW-0328">Glycosyltransferase</keyword>
<keyword id="KW-0660">Purine salvage</keyword>
<keyword id="KW-1185">Reference proteome</keyword>
<keyword id="KW-0808">Transferase</keyword>
<gene>
    <name evidence="1" type="primary">hpt</name>
    <name type="ordered locus">Ferp_2109</name>
</gene>
<feature type="chain" id="PRO_0000415447" description="Hypoxanthine/guanine phosphoribosyltransferase">
    <location>
        <begin position="1"/>
        <end position="187"/>
    </location>
</feature>
<organism>
    <name type="scientific">Ferroglobus placidus (strain DSM 10642 / AEDII12DO)</name>
    <dbReference type="NCBI Taxonomy" id="589924"/>
    <lineage>
        <taxon>Archaea</taxon>
        <taxon>Methanobacteriati</taxon>
        <taxon>Methanobacteriota</taxon>
        <taxon>Archaeoglobi</taxon>
        <taxon>Archaeoglobales</taxon>
        <taxon>Archaeoglobaceae</taxon>
        <taxon>Ferroglobus</taxon>
    </lineage>
</organism>
<accession>D3S0H7</accession>
<sequence>MLNKLIESLKNAPIIMKGDYPYFIHPLTDGVPELDPDIVREAVSGIIRIADLDVDKIVTIEAMGIPVATALSLAVNIPIVVVRKRSYGFPNEIVVDQQTGYSKGKLYINGIDKGDEVIVVDDVISTGGTALATLKALEKAGAIVKDFVTVIEKGDGAEKLRKMGYKIKSLVKIEVSKDGVKIVDHLR</sequence>